<proteinExistence type="inferred from homology"/>
<gene>
    <name evidence="1" type="primary">acsA</name>
    <name type="ordered locus">PM0692</name>
</gene>
<feature type="chain" id="PRO_0000208372" description="Acetyl-coenzyme A synthetase">
    <location>
        <begin position="1"/>
        <end position="653"/>
    </location>
</feature>
<feature type="binding site" evidence="1">
    <location>
        <begin position="195"/>
        <end position="198"/>
    </location>
    <ligand>
        <name>CoA</name>
        <dbReference type="ChEBI" id="CHEBI:57287"/>
    </ligand>
</feature>
<feature type="binding site" evidence="1">
    <location>
        <position position="314"/>
    </location>
    <ligand>
        <name>CoA</name>
        <dbReference type="ChEBI" id="CHEBI:57287"/>
    </ligand>
</feature>
<feature type="binding site" evidence="1">
    <location>
        <begin position="390"/>
        <end position="392"/>
    </location>
    <ligand>
        <name>ATP</name>
        <dbReference type="ChEBI" id="CHEBI:30616"/>
    </ligand>
</feature>
<feature type="binding site" evidence="1">
    <location>
        <begin position="414"/>
        <end position="419"/>
    </location>
    <ligand>
        <name>ATP</name>
        <dbReference type="ChEBI" id="CHEBI:30616"/>
    </ligand>
</feature>
<feature type="binding site" evidence="1">
    <location>
        <position position="505"/>
    </location>
    <ligand>
        <name>ATP</name>
        <dbReference type="ChEBI" id="CHEBI:30616"/>
    </ligand>
</feature>
<feature type="binding site" evidence="1">
    <location>
        <position position="520"/>
    </location>
    <ligand>
        <name>ATP</name>
        <dbReference type="ChEBI" id="CHEBI:30616"/>
    </ligand>
</feature>
<feature type="binding site" evidence="1">
    <location>
        <position position="528"/>
    </location>
    <ligand>
        <name>CoA</name>
        <dbReference type="ChEBI" id="CHEBI:57287"/>
    </ligand>
</feature>
<feature type="binding site" evidence="1">
    <location>
        <position position="531"/>
    </location>
    <ligand>
        <name>ATP</name>
        <dbReference type="ChEBI" id="CHEBI:30616"/>
    </ligand>
</feature>
<feature type="binding site" evidence="1">
    <location>
        <position position="542"/>
    </location>
    <ligand>
        <name>Mg(2+)</name>
        <dbReference type="ChEBI" id="CHEBI:18420"/>
    </ligand>
</feature>
<feature type="binding site" evidence="1">
    <location>
        <position position="547"/>
    </location>
    <ligand>
        <name>Mg(2+)</name>
        <dbReference type="ChEBI" id="CHEBI:18420"/>
    </ligand>
</feature>
<feature type="modified residue" description="N6-acetyllysine" evidence="1">
    <location>
        <position position="617"/>
    </location>
</feature>
<organism>
    <name type="scientific">Pasteurella multocida (strain Pm70)</name>
    <dbReference type="NCBI Taxonomy" id="272843"/>
    <lineage>
        <taxon>Bacteria</taxon>
        <taxon>Pseudomonadati</taxon>
        <taxon>Pseudomonadota</taxon>
        <taxon>Gammaproteobacteria</taxon>
        <taxon>Pasteurellales</taxon>
        <taxon>Pasteurellaceae</taxon>
        <taxon>Pasteurella</taxon>
    </lineage>
</organism>
<evidence type="ECO:0000255" key="1">
    <source>
        <dbReference type="HAMAP-Rule" id="MF_01123"/>
    </source>
</evidence>
<reference key="1">
    <citation type="journal article" date="2001" name="Proc. Natl. Acad. Sci. U.S.A.">
        <title>Complete genomic sequence of Pasteurella multocida Pm70.</title>
        <authorList>
            <person name="May B.J."/>
            <person name="Zhang Q."/>
            <person name="Li L.L."/>
            <person name="Paustian M.L."/>
            <person name="Whittam T.S."/>
            <person name="Kapur V."/>
        </authorList>
    </citation>
    <scope>NUCLEOTIDE SEQUENCE [LARGE SCALE GENOMIC DNA]</scope>
    <source>
        <strain>Pm70</strain>
    </source>
</reference>
<sequence length="653" mass="73616">MPHNSMLKENRLFKPTDEFRRQANISGLETYQALWEFADKDYLTYWSDLARELITWKKPFMHIFDDSEAPFYKWFSDGTLNVSYNCLDRHLPDKADKTALIFESDFGQVQLYTYAKLHNRVCRFANALRELGIKKGDRVIIYLPMLVEAVIAMQACARIGAVHSVVFGGFSASALRDRIEDAEAKLVITANAGLRGGKIIPLKETVDEALEMGCKTIENVIVFHRVNIDTPWKKGRDLWWNELTANQPAFCEPEWMNAEDPLFILYTSGSTGKPKGIVHSTGGYLLGALNSFRNVFDNKPNDIFWCTADVGWITGHSYVCYGPLANGATQVIFEGVPTYPDPGRIWRMIQRHKINVFYTSPTLIRSLTRLGDHIPNKYDLSSLRLLGSVGEPINPSAWMWFYEVVGKSRCPIVDTWWQTETGSIMLAPIPGVTATKPGSCTLPLPGIMAEVLDENGQKCAVEQGGALAIKRPFPSMLRTIWNDPERYKSTYFPAEYGGKYYIAGDNAHRDKDGYFWILGRTDDVLNVSGHRLGTMEIESALVASPKVAEAAVVGKPDEIKGEAIVAFVVLNDFRPEGEEARQLAEELKAWVSNEIGKIARPEDIRFADNLPKTRSGKIMRRLLRSIAKNEMITQDISTLENPQIIGQLQQQWL</sequence>
<protein>
    <recommendedName>
        <fullName evidence="1">Acetyl-coenzyme A synthetase</fullName>
        <shortName evidence="1">AcCoA synthetase</shortName>
        <shortName evidence="1">Acs</shortName>
        <ecNumber evidence="1">6.2.1.1</ecNumber>
    </recommendedName>
    <alternativeName>
        <fullName evidence="1">Acetate--CoA ligase</fullName>
    </alternativeName>
    <alternativeName>
        <fullName evidence="1">Acyl-activating enzyme</fullName>
    </alternativeName>
</protein>
<keyword id="KW-0007">Acetylation</keyword>
<keyword id="KW-0067">ATP-binding</keyword>
<keyword id="KW-0436">Ligase</keyword>
<keyword id="KW-0460">Magnesium</keyword>
<keyword id="KW-0479">Metal-binding</keyword>
<keyword id="KW-0547">Nucleotide-binding</keyword>
<keyword id="KW-1185">Reference proteome</keyword>
<dbReference type="EC" id="6.2.1.1" evidence="1"/>
<dbReference type="EMBL" id="AE004439">
    <property type="protein sequence ID" value="AAK02776.1"/>
    <property type="molecule type" value="Genomic_DNA"/>
</dbReference>
<dbReference type="SMR" id="Q9CMW1"/>
<dbReference type="STRING" id="272843.PM0692"/>
<dbReference type="EnsemblBacteria" id="AAK02776">
    <property type="protein sequence ID" value="AAK02776"/>
    <property type="gene ID" value="PM0692"/>
</dbReference>
<dbReference type="KEGG" id="pmu:PM0692"/>
<dbReference type="PATRIC" id="fig|272843.6.peg.700"/>
<dbReference type="HOGENOM" id="CLU_000022_3_6_6"/>
<dbReference type="OrthoDB" id="9803968at2"/>
<dbReference type="Proteomes" id="UP000000809">
    <property type="component" value="Chromosome"/>
</dbReference>
<dbReference type="GO" id="GO:0005829">
    <property type="term" value="C:cytosol"/>
    <property type="evidence" value="ECO:0007669"/>
    <property type="project" value="TreeGrafter"/>
</dbReference>
<dbReference type="GO" id="GO:0016020">
    <property type="term" value="C:membrane"/>
    <property type="evidence" value="ECO:0007669"/>
    <property type="project" value="InterPro"/>
</dbReference>
<dbReference type="GO" id="GO:0003987">
    <property type="term" value="F:acetate-CoA ligase activity"/>
    <property type="evidence" value="ECO:0007669"/>
    <property type="project" value="UniProtKB-UniRule"/>
</dbReference>
<dbReference type="GO" id="GO:0016208">
    <property type="term" value="F:AMP binding"/>
    <property type="evidence" value="ECO:0007669"/>
    <property type="project" value="InterPro"/>
</dbReference>
<dbReference type="GO" id="GO:0005524">
    <property type="term" value="F:ATP binding"/>
    <property type="evidence" value="ECO:0007669"/>
    <property type="project" value="UniProtKB-KW"/>
</dbReference>
<dbReference type="GO" id="GO:0046872">
    <property type="term" value="F:metal ion binding"/>
    <property type="evidence" value="ECO:0007669"/>
    <property type="project" value="UniProtKB-KW"/>
</dbReference>
<dbReference type="GO" id="GO:0004252">
    <property type="term" value="F:serine-type endopeptidase activity"/>
    <property type="evidence" value="ECO:0007669"/>
    <property type="project" value="InterPro"/>
</dbReference>
<dbReference type="GO" id="GO:0019427">
    <property type="term" value="P:acetyl-CoA biosynthetic process from acetate"/>
    <property type="evidence" value="ECO:0007669"/>
    <property type="project" value="InterPro"/>
</dbReference>
<dbReference type="CDD" id="cd05966">
    <property type="entry name" value="ACS"/>
    <property type="match status" value="1"/>
</dbReference>
<dbReference type="FunFam" id="3.40.50.12780:FF:000001">
    <property type="entry name" value="Acetyl-coenzyme A synthetase"/>
    <property type="match status" value="1"/>
</dbReference>
<dbReference type="Gene3D" id="3.30.300.30">
    <property type="match status" value="1"/>
</dbReference>
<dbReference type="Gene3D" id="3.40.50.12780">
    <property type="entry name" value="N-terminal domain of ligase-like"/>
    <property type="match status" value="1"/>
</dbReference>
<dbReference type="HAMAP" id="MF_01123">
    <property type="entry name" value="Ac_CoA_synth"/>
    <property type="match status" value="1"/>
</dbReference>
<dbReference type="InterPro" id="IPR011904">
    <property type="entry name" value="Ac_CoA_lig"/>
</dbReference>
<dbReference type="InterPro" id="IPR032387">
    <property type="entry name" value="ACAS_N"/>
</dbReference>
<dbReference type="InterPro" id="IPR025110">
    <property type="entry name" value="AMP-bd_C"/>
</dbReference>
<dbReference type="InterPro" id="IPR045851">
    <property type="entry name" value="AMP-bd_C_sf"/>
</dbReference>
<dbReference type="InterPro" id="IPR020845">
    <property type="entry name" value="AMP-binding_CS"/>
</dbReference>
<dbReference type="InterPro" id="IPR000873">
    <property type="entry name" value="AMP-dep_synth/lig_dom"/>
</dbReference>
<dbReference type="InterPro" id="IPR042099">
    <property type="entry name" value="ANL_N_sf"/>
</dbReference>
<dbReference type="InterPro" id="IPR019758">
    <property type="entry name" value="Pept_S26A_signal_pept_1_CS"/>
</dbReference>
<dbReference type="NCBIfam" id="TIGR02188">
    <property type="entry name" value="Ac_CoA_lig_AcsA"/>
    <property type="match status" value="1"/>
</dbReference>
<dbReference type="NCBIfam" id="NF001208">
    <property type="entry name" value="PRK00174.1"/>
    <property type="match status" value="1"/>
</dbReference>
<dbReference type="PANTHER" id="PTHR24095">
    <property type="entry name" value="ACETYL-COENZYME A SYNTHETASE"/>
    <property type="match status" value="1"/>
</dbReference>
<dbReference type="PANTHER" id="PTHR24095:SF14">
    <property type="entry name" value="ACETYL-COENZYME A SYNTHETASE 1"/>
    <property type="match status" value="1"/>
</dbReference>
<dbReference type="Pfam" id="PF16177">
    <property type="entry name" value="ACAS_N"/>
    <property type="match status" value="1"/>
</dbReference>
<dbReference type="Pfam" id="PF00501">
    <property type="entry name" value="AMP-binding"/>
    <property type="match status" value="1"/>
</dbReference>
<dbReference type="Pfam" id="PF13193">
    <property type="entry name" value="AMP-binding_C"/>
    <property type="match status" value="1"/>
</dbReference>
<dbReference type="SUPFAM" id="SSF56801">
    <property type="entry name" value="Acetyl-CoA synthetase-like"/>
    <property type="match status" value="1"/>
</dbReference>
<dbReference type="PROSITE" id="PS00455">
    <property type="entry name" value="AMP_BINDING"/>
    <property type="match status" value="1"/>
</dbReference>
<comment type="function">
    <text evidence="1">Catalyzes the conversion of acetate into acetyl-CoA (AcCoA), an essential intermediate at the junction of anabolic and catabolic pathways. AcsA undergoes a two-step reaction. In the first half reaction, AcsA combines acetate with ATP to form acetyl-adenylate (AcAMP) intermediate. In the second half reaction, it can then transfer the acetyl group from AcAMP to the sulfhydryl group of CoA, forming the product AcCoA.</text>
</comment>
<comment type="catalytic activity">
    <reaction evidence="1">
        <text>acetate + ATP + CoA = acetyl-CoA + AMP + diphosphate</text>
        <dbReference type="Rhea" id="RHEA:23176"/>
        <dbReference type="ChEBI" id="CHEBI:30089"/>
        <dbReference type="ChEBI" id="CHEBI:30616"/>
        <dbReference type="ChEBI" id="CHEBI:33019"/>
        <dbReference type="ChEBI" id="CHEBI:57287"/>
        <dbReference type="ChEBI" id="CHEBI:57288"/>
        <dbReference type="ChEBI" id="CHEBI:456215"/>
        <dbReference type="EC" id="6.2.1.1"/>
    </reaction>
</comment>
<comment type="cofactor">
    <cofactor evidence="1">
        <name>Mg(2+)</name>
        <dbReference type="ChEBI" id="CHEBI:18420"/>
    </cofactor>
</comment>
<comment type="PTM">
    <text evidence="1">Acetylated. Deacetylation by the SIR2-homolog deacetylase activates the enzyme.</text>
</comment>
<comment type="similarity">
    <text evidence="1">Belongs to the ATP-dependent AMP-binding enzyme family.</text>
</comment>
<name>ACSA_PASMU</name>
<accession>Q9CMW1</accession>